<accession>A9BNG3</accession>
<comment type="function">
    <text evidence="1">Binds together with bS18 to 16S ribosomal RNA.</text>
</comment>
<comment type="similarity">
    <text evidence="1">Belongs to the bacterial ribosomal protein bS6 family.</text>
</comment>
<gene>
    <name evidence="1" type="primary">rpsF</name>
    <name type="ordered locus">Daci_5229</name>
</gene>
<dbReference type="EMBL" id="CP000884">
    <property type="protein sequence ID" value="ABX37858.1"/>
    <property type="molecule type" value="Genomic_DNA"/>
</dbReference>
<dbReference type="RefSeq" id="WP_012207028.1">
    <property type="nucleotide sequence ID" value="NC_010002.1"/>
</dbReference>
<dbReference type="SMR" id="A9BNG3"/>
<dbReference type="STRING" id="398578.Daci_5229"/>
<dbReference type="GeneID" id="94690773"/>
<dbReference type="KEGG" id="dac:Daci_5229"/>
<dbReference type="eggNOG" id="COG0360">
    <property type="taxonomic scope" value="Bacteria"/>
</dbReference>
<dbReference type="HOGENOM" id="CLU_113441_6_1_4"/>
<dbReference type="Proteomes" id="UP000000784">
    <property type="component" value="Chromosome"/>
</dbReference>
<dbReference type="GO" id="GO:0022627">
    <property type="term" value="C:cytosolic small ribosomal subunit"/>
    <property type="evidence" value="ECO:0007669"/>
    <property type="project" value="TreeGrafter"/>
</dbReference>
<dbReference type="GO" id="GO:0070181">
    <property type="term" value="F:small ribosomal subunit rRNA binding"/>
    <property type="evidence" value="ECO:0007669"/>
    <property type="project" value="TreeGrafter"/>
</dbReference>
<dbReference type="GO" id="GO:0003735">
    <property type="term" value="F:structural constituent of ribosome"/>
    <property type="evidence" value="ECO:0007669"/>
    <property type="project" value="InterPro"/>
</dbReference>
<dbReference type="GO" id="GO:0006412">
    <property type="term" value="P:translation"/>
    <property type="evidence" value="ECO:0007669"/>
    <property type="project" value="UniProtKB-UniRule"/>
</dbReference>
<dbReference type="CDD" id="cd00473">
    <property type="entry name" value="bS6"/>
    <property type="match status" value="1"/>
</dbReference>
<dbReference type="Gene3D" id="3.30.70.60">
    <property type="match status" value="1"/>
</dbReference>
<dbReference type="HAMAP" id="MF_00360">
    <property type="entry name" value="Ribosomal_bS6"/>
    <property type="match status" value="1"/>
</dbReference>
<dbReference type="InterPro" id="IPR000529">
    <property type="entry name" value="Ribosomal_bS6"/>
</dbReference>
<dbReference type="InterPro" id="IPR020815">
    <property type="entry name" value="Ribosomal_bS6_CS"/>
</dbReference>
<dbReference type="InterPro" id="IPR035980">
    <property type="entry name" value="Ribosomal_bS6_sf"/>
</dbReference>
<dbReference type="InterPro" id="IPR020814">
    <property type="entry name" value="Ribosomal_S6_plastid/chlpt"/>
</dbReference>
<dbReference type="InterPro" id="IPR014717">
    <property type="entry name" value="Transl_elong_EF1B/ribsomal_bS6"/>
</dbReference>
<dbReference type="NCBIfam" id="TIGR00166">
    <property type="entry name" value="S6"/>
    <property type="match status" value="1"/>
</dbReference>
<dbReference type="PANTHER" id="PTHR21011">
    <property type="entry name" value="MITOCHONDRIAL 28S RIBOSOMAL PROTEIN S6"/>
    <property type="match status" value="1"/>
</dbReference>
<dbReference type="PANTHER" id="PTHR21011:SF1">
    <property type="entry name" value="SMALL RIBOSOMAL SUBUNIT PROTEIN BS6M"/>
    <property type="match status" value="1"/>
</dbReference>
<dbReference type="Pfam" id="PF01250">
    <property type="entry name" value="Ribosomal_S6"/>
    <property type="match status" value="1"/>
</dbReference>
<dbReference type="SUPFAM" id="SSF54995">
    <property type="entry name" value="Ribosomal protein S6"/>
    <property type="match status" value="1"/>
</dbReference>
<dbReference type="PROSITE" id="PS01048">
    <property type="entry name" value="RIBOSOMAL_S6"/>
    <property type="match status" value="1"/>
</dbReference>
<name>RS6_DELAS</name>
<reference key="1">
    <citation type="submission" date="2007-11" db="EMBL/GenBank/DDBJ databases">
        <title>Complete sequence of Delftia acidovorans DSM 14801 / SPH-1.</title>
        <authorList>
            <person name="Copeland A."/>
            <person name="Lucas S."/>
            <person name="Lapidus A."/>
            <person name="Barry K."/>
            <person name="Glavina del Rio T."/>
            <person name="Dalin E."/>
            <person name="Tice H."/>
            <person name="Pitluck S."/>
            <person name="Lowry S."/>
            <person name="Clum A."/>
            <person name="Schmutz J."/>
            <person name="Larimer F."/>
            <person name="Land M."/>
            <person name="Hauser L."/>
            <person name="Kyrpides N."/>
            <person name="Kim E."/>
            <person name="Schleheck D."/>
            <person name="Richardson P."/>
        </authorList>
    </citation>
    <scope>NUCLEOTIDE SEQUENCE [LARGE SCALE GENOMIC DNA]</scope>
    <source>
        <strain>DSM 14801 / SPH-1</strain>
    </source>
</reference>
<organism>
    <name type="scientific">Delftia acidovorans (strain DSM 14801 / SPH-1)</name>
    <dbReference type="NCBI Taxonomy" id="398578"/>
    <lineage>
        <taxon>Bacteria</taxon>
        <taxon>Pseudomonadati</taxon>
        <taxon>Pseudomonadota</taxon>
        <taxon>Betaproteobacteria</taxon>
        <taxon>Burkholderiales</taxon>
        <taxon>Comamonadaceae</taxon>
        <taxon>Delftia</taxon>
    </lineage>
</organism>
<protein>
    <recommendedName>
        <fullName evidence="1">Small ribosomal subunit protein bS6</fullName>
    </recommendedName>
    <alternativeName>
        <fullName evidence="3">30S ribosomal protein S6</fullName>
    </alternativeName>
</protein>
<evidence type="ECO:0000255" key="1">
    <source>
        <dbReference type="HAMAP-Rule" id="MF_00360"/>
    </source>
</evidence>
<evidence type="ECO:0000256" key="2">
    <source>
        <dbReference type="SAM" id="MobiDB-lite"/>
    </source>
</evidence>
<evidence type="ECO:0000305" key="3"/>
<keyword id="KW-1185">Reference proteome</keyword>
<keyword id="KW-0687">Ribonucleoprotein</keyword>
<keyword id="KW-0689">Ribosomal protein</keyword>
<keyword id="KW-0694">RNA-binding</keyword>
<keyword id="KW-0699">rRNA-binding</keyword>
<proteinExistence type="inferred from homology"/>
<sequence length="120" mass="13779">MRHYEIVLLIHPDQSEQVPAMLERYKGMITAGGGKVHREEDWGRRQLAYMINKLAKAHYLCLNIEADQAVMAELEHAFKFNDAVLRHLTVQKKKADTAPSSMMKTVEREEARKASQTEQA</sequence>
<feature type="chain" id="PRO_1000120736" description="Small ribosomal subunit protein bS6">
    <location>
        <begin position="1"/>
        <end position="120"/>
    </location>
</feature>
<feature type="region of interest" description="Disordered" evidence="2">
    <location>
        <begin position="93"/>
        <end position="120"/>
    </location>
</feature>
<feature type="compositionally biased region" description="Basic and acidic residues" evidence="2">
    <location>
        <begin position="105"/>
        <end position="120"/>
    </location>
</feature>